<proteinExistence type="inferred from homology"/>
<protein>
    <recommendedName>
        <fullName evidence="1">Phosphoribosyl-AMP cyclohydrolase</fullName>
        <shortName evidence="1">PRA-CH</shortName>
        <ecNumber evidence="1">3.5.4.19</ecNumber>
    </recommendedName>
</protein>
<organism>
    <name type="scientific">Burkholderia mallei (strain SAVP1)</name>
    <dbReference type="NCBI Taxonomy" id="320388"/>
    <lineage>
        <taxon>Bacteria</taxon>
        <taxon>Pseudomonadati</taxon>
        <taxon>Pseudomonadota</taxon>
        <taxon>Betaproteobacteria</taxon>
        <taxon>Burkholderiales</taxon>
        <taxon>Burkholderiaceae</taxon>
        <taxon>Burkholderia</taxon>
        <taxon>pseudomallei group</taxon>
    </lineage>
</organism>
<gene>
    <name evidence="1" type="primary">hisI</name>
    <name type="ordered locus">BMASAVP1_A3246</name>
</gene>
<name>HIS3_BURMS</name>
<sequence>MNAEAKPGDWLGKVRWDANGLVPVIAQDAATNDVLMFAWMNRDALAKTIELKRAVYYSRSRQRLWFKGEESGHVQHVHEVRLDCDEDVVLLKVEQVEGIACHTGRRSCFFQKFEGTVDDGEWVAVDPVLKDPEHIYK</sequence>
<dbReference type="EC" id="3.5.4.19" evidence="1"/>
<dbReference type="EMBL" id="CP000526">
    <property type="protein sequence ID" value="ABM51725.1"/>
    <property type="molecule type" value="Genomic_DNA"/>
</dbReference>
<dbReference type="RefSeq" id="WP_004201279.1">
    <property type="nucleotide sequence ID" value="NC_008785.1"/>
</dbReference>
<dbReference type="SMR" id="A1V8H6"/>
<dbReference type="GeneID" id="93061749"/>
<dbReference type="KEGG" id="bmv:BMASAVP1_A3246"/>
<dbReference type="HOGENOM" id="CLU_048577_5_0_4"/>
<dbReference type="UniPathway" id="UPA00031">
    <property type="reaction ID" value="UER00008"/>
</dbReference>
<dbReference type="GO" id="GO:0005737">
    <property type="term" value="C:cytoplasm"/>
    <property type="evidence" value="ECO:0007669"/>
    <property type="project" value="UniProtKB-SubCell"/>
</dbReference>
<dbReference type="GO" id="GO:0000287">
    <property type="term" value="F:magnesium ion binding"/>
    <property type="evidence" value="ECO:0007669"/>
    <property type="project" value="UniProtKB-UniRule"/>
</dbReference>
<dbReference type="GO" id="GO:0004635">
    <property type="term" value="F:phosphoribosyl-AMP cyclohydrolase activity"/>
    <property type="evidence" value="ECO:0007669"/>
    <property type="project" value="UniProtKB-UniRule"/>
</dbReference>
<dbReference type="GO" id="GO:0008270">
    <property type="term" value="F:zinc ion binding"/>
    <property type="evidence" value="ECO:0007669"/>
    <property type="project" value="UniProtKB-UniRule"/>
</dbReference>
<dbReference type="GO" id="GO:0000105">
    <property type="term" value="P:L-histidine biosynthetic process"/>
    <property type="evidence" value="ECO:0007669"/>
    <property type="project" value="UniProtKB-UniRule"/>
</dbReference>
<dbReference type="FunFam" id="3.10.20.810:FF:000001">
    <property type="entry name" value="Histidine biosynthesis bifunctional protein HisIE"/>
    <property type="match status" value="1"/>
</dbReference>
<dbReference type="Gene3D" id="3.10.20.810">
    <property type="entry name" value="Phosphoribosyl-AMP cyclohydrolase"/>
    <property type="match status" value="1"/>
</dbReference>
<dbReference type="HAMAP" id="MF_01021">
    <property type="entry name" value="HisI"/>
    <property type="match status" value="1"/>
</dbReference>
<dbReference type="InterPro" id="IPR026660">
    <property type="entry name" value="PRA-CH"/>
</dbReference>
<dbReference type="InterPro" id="IPR002496">
    <property type="entry name" value="PRib_AMP_CycHydrolase_dom"/>
</dbReference>
<dbReference type="InterPro" id="IPR038019">
    <property type="entry name" value="PRib_AMP_CycHydrolase_sf"/>
</dbReference>
<dbReference type="NCBIfam" id="NF000768">
    <property type="entry name" value="PRK00051.1"/>
    <property type="match status" value="1"/>
</dbReference>
<dbReference type="PANTHER" id="PTHR42945">
    <property type="entry name" value="HISTIDINE BIOSYNTHESIS BIFUNCTIONAL PROTEIN"/>
    <property type="match status" value="1"/>
</dbReference>
<dbReference type="PANTHER" id="PTHR42945:SF1">
    <property type="entry name" value="HISTIDINE BIOSYNTHESIS BIFUNCTIONAL PROTEIN HIS7"/>
    <property type="match status" value="1"/>
</dbReference>
<dbReference type="Pfam" id="PF01502">
    <property type="entry name" value="PRA-CH"/>
    <property type="match status" value="1"/>
</dbReference>
<dbReference type="SUPFAM" id="SSF141734">
    <property type="entry name" value="HisI-like"/>
    <property type="match status" value="1"/>
</dbReference>
<evidence type="ECO:0000255" key="1">
    <source>
        <dbReference type="HAMAP-Rule" id="MF_01021"/>
    </source>
</evidence>
<comment type="function">
    <text evidence="1">Catalyzes the hydrolysis of the adenine ring of phosphoribosyl-AMP.</text>
</comment>
<comment type="catalytic activity">
    <reaction evidence="1">
        <text>1-(5-phospho-beta-D-ribosyl)-5'-AMP + H2O = 1-(5-phospho-beta-D-ribosyl)-5-[(5-phospho-beta-D-ribosylamino)methylideneamino]imidazole-4-carboxamide</text>
        <dbReference type="Rhea" id="RHEA:20049"/>
        <dbReference type="ChEBI" id="CHEBI:15377"/>
        <dbReference type="ChEBI" id="CHEBI:58435"/>
        <dbReference type="ChEBI" id="CHEBI:59457"/>
        <dbReference type="EC" id="3.5.4.19"/>
    </reaction>
</comment>
<comment type="cofactor">
    <cofactor evidence="1">
        <name>Mg(2+)</name>
        <dbReference type="ChEBI" id="CHEBI:18420"/>
    </cofactor>
    <text evidence="1">Binds 1 Mg(2+) ion per subunit.</text>
</comment>
<comment type="cofactor">
    <cofactor evidence="1">
        <name>Zn(2+)</name>
        <dbReference type="ChEBI" id="CHEBI:29105"/>
    </cofactor>
    <text evidence="1">Binds 1 zinc ion per subunit.</text>
</comment>
<comment type="pathway">
    <text evidence="1">Amino-acid biosynthesis; L-histidine biosynthesis; L-histidine from 5-phospho-alpha-D-ribose 1-diphosphate: step 3/9.</text>
</comment>
<comment type="subunit">
    <text evidence="1">Homodimer.</text>
</comment>
<comment type="subcellular location">
    <subcellularLocation>
        <location evidence="1">Cytoplasm</location>
    </subcellularLocation>
</comment>
<comment type="similarity">
    <text evidence="1">Belongs to the PRA-CH family.</text>
</comment>
<feature type="chain" id="PRO_1000063396" description="Phosphoribosyl-AMP cyclohydrolase">
    <location>
        <begin position="1"/>
        <end position="137"/>
    </location>
</feature>
<feature type="binding site" evidence="1">
    <location>
        <position position="83"/>
    </location>
    <ligand>
        <name>Mg(2+)</name>
        <dbReference type="ChEBI" id="CHEBI:18420"/>
    </ligand>
</feature>
<feature type="binding site" evidence="1">
    <location>
        <position position="84"/>
    </location>
    <ligand>
        <name>Zn(2+)</name>
        <dbReference type="ChEBI" id="CHEBI:29105"/>
        <note>ligand shared between dimeric partners</note>
    </ligand>
</feature>
<feature type="binding site" evidence="1">
    <location>
        <position position="85"/>
    </location>
    <ligand>
        <name>Mg(2+)</name>
        <dbReference type="ChEBI" id="CHEBI:18420"/>
    </ligand>
</feature>
<feature type="binding site" evidence="1">
    <location>
        <position position="87"/>
    </location>
    <ligand>
        <name>Mg(2+)</name>
        <dbReference type="ChEBI" id="CHEBI:18420"/>
    </ligand>
</feature>
<feature type="binding site" evidence="1">
    <location>
        <position position="101"/>
    </location>
    <ligand>
        <name>Zn(2+)</name>
        <dbReference type="ChEBI" id="CHEBI:29105"/>
        <note>ligand shared between dimeric partners</note>
    </ligand>
</feature>
<feature type="binding site" evidence="1">
    <location>
        <position position="108"/>
    </location>
    <ligand>
        <name>Zn(2+)</name>
        <dbReference type="ChEBI" id="CHEBI:29105"/>
        <note>ligand shared between dimeric partners</note>
    </ligand>
</feature>
<keyword id="KW-0028">Amino-acid biosynthesis</keyword>
<keyword id="KW-0963">Cytoplasm</keyword>
<keyword id="KW-0368">Histidine biosynthesis</keyword>
<keyword id="KW-0378">Hydrolase</keyword>
<keyword id="KW-0460">Magnesium</keyword>
<keyword id="KW-0479">Metal-binding</keyword>
<keyword id="KW-0862">Zinc</keyword>
<accession>A1V8H6</accession>
<reference key="1">
    <citation type="journal article" date="2010" name="Genome Biol. Evol.">
        <title>Continuing evolution of Burkholderia mallei through genome reduction and large-scale rearrangements.</title>
        <authorList>
            <person name="Losada L."/>
            <person name="Ronning C.M."/>
            <person name="DeShazer D."/>
            <person name="Woods D."/>
            <person name="Fedorova N."/>
            <person name="Kim H.S."/>
            <person name="Shabalina S.A."/>
            <person name="Pearson T.R."/>
            <person name="Brinkac L."/>
            <person name="Tan P."/>
            <person name="Nandi T."/>
            <person name="Crabtree J."/>
            <person name="Badger J."/>
            <person name="Beckstrom-Sternberg S."/>
            <person name="Saqib M."/>
            <person name="Schutzer S.E."/>
            <person name="Keim P."/>
            <person name="Nierman W.C."/>
        </authorList>
    </citation>
    <scope>NUCLEOTIDE SEQUENCE [LARGE SCALE GENOMIC DNA]</scope>
    <source>
        <strain>SAVP1</strain>
    </source>
</reference>